<dbReference type="EMBL" id="BX323889">
    <property type="protein sequence ID" value="CAI11614.1"/>
    <property type="molecule type" value="Genomic_DNA"/>
</dbReference>
<dbReference type="EMBL" id="BC049514">
    <property type="protein sequence ID" value="AAH49514.1"/>
    <property type="molecule type" value="mRNA"/>
</dbReference>
<dbReference type="EMBL" id="BC066633">
    <property type="protein sequence ID" value="AAH66633.1"/>
    <property type="molecule type" value="mRNA"/>
</dbReference>
<dbReference type="RefSeq" id="NP_956596.1">
    <property type="nucleotide sequence ID" value="NM_200302.2"/>
</dbReference>
<dbReference type="FunCoup" id="Q6NYD7">
    <property type="interactions" value="1208"/>
</dbReference>
<dbReference type="STRING" id="7955.ENSDARP00000094142"/>
<dbReference type="PaxDb" id="7955-ENSDARP00000094142"/>
<dbReference type="Ensembl" id="ENSDART00000103365">
    <property type="protein sequence ID" value="ENSDARP00000094142"/>
    <property type="gene ID" value="ENSDARG00000052334"/>
</dbReference>
<dbReference type="Ensembl" id="ENSDART00000141510">
    <property type="protein sequence ID" value="ENSDARP00000112683"/>
    <property type="gene ID" value="ENSDARG00000052334"/>
</dbReference>
<dbReference type="GeneID" id="393272"/>
<dbReference type="KEGG" id="dre:393272"/>
<dbReference type="AGR" id="ZFIN:ZDB-GENE-040426-1100"/>
<dbReference type="CTD" id="54940"/>
<dbReference type="ZFIN" id="ZDB-GENE-040426-1100">
    <property type="gene designation" value="ociad1"/>
</dbReference>
<dbReference type="eggNOG" id="ENOG502RXQR">
    <property type="taxonomic scope" value="Eukaryota"/>
</dbReference>
<dbReference type="HOGENOM" id="CLU_083038_0_0_1"/>
<dbReference type="InParanoid" id="Q6NYD7"/>
<dbReference type="OMA" id="CARESFI"/>
<dbReference type="OrthoDB" id="6513616at2759"/>
<dbReference type="PhylomeDB" id="Q6NYD7"/>
<dbReference type="TreeFam" id="TF327106"/>
<dbReference type="ChiTaRS" id="ociad1">
    <property type="organism name" value="zebrafish"/>
</dbReference>
<dbReference type="PRO" id="PR:Q6NYD7"/>
<dbReference type="Proteomes" id="UP000000437">
    <property type="component" value="Chromosome 20"/>
</dbReference>
<dbReference type="Bgee" id="ENSDARG00000052334">
    <property type="expression patterns" value="Expressed in early embryo and 27 other cell types or tissues"/>
</dbReference>
<dbReference type="GO" id="GO:0005768">
    <property type="term" value="C:endosome"/>
    <property type="evidence" value="ECO:0000318"/>
    <property type="project" value="GO_Central"/>
</dbReference>
<dbReference type="InterPro" id="IPR040187">
    <property type="entry name" value="OCAD1/2"/>
</dbReference>
<dbReference type="InterPro" id="IPR009764">
    <property type="entry name" value="OCIA_dom"/>
</dbReference>
<dbReference type="PANTHER" id="PTHR13336:SF4">
    <property type="entry name" value="OCIA DOMAIN-CONTAINING PROTEIN 1"/>
    <property type="match status" value="1"/>
</dbReference>
<dbReference type="PANTHER" id="PTHR13336">
    <property type="entry name" value="OVARIAN CARCINOMA IMMUNOREACTIVE ANTIGEN"/>
    <property type="match status" value="1"/>
</dbReference>
<dbReference type="Pfam" id="PF07051">
    <property type="entry name" value="OCIA"/>
    <property type="match status" value="1"/>
</dbReference>
<protein>
    <recommendedName>
        <fullName>OCIA domain-containing protein 1</fullName>
    </recommendedName>
</protein>
<proteinExistence type="evidence at transcript level"/>
<evidence type="ECO:0000250" key="1"/>
<evidence type="ECO:0000256" key="2">
    <source>
        <dbReference type="SAM" id="MobiDB-lite"/>
    </source>
</evidence>
<evidence type="ECO:0000305" key="3"/>
<name>OCAD1_DANRE</name>
<organism>
    <name type="scientific">Danio rerio</name>
    <name type="common">Zebrafish</name>
    <name type="synonym">Brachydanio rerio</name>
    <dbReference type="NCBI Taxonomy" id="7955"/>
    <lineage>
        <taxon>Eukaryota</taxon>
        <taxon>Metazoa</taxon>
        <taxon>Chordata</taxon>
        <taxon>Craniata</taxon>
        <taxon>Vertebrata</taxon>
        <taxon>Euteleostomi</taxon>
        <taxon>Actinopterygii</taxon>
        <taxon>Neopterygii</taxon>
        <taxon>Teleostei</taxon>
        <taxon>Ostariophysi</taxon>
        <taxon>Cypriniformes</taxon>
        <taxon>Danionidae</taxon>
        <taxon>Danioninae</taxon>
        <taxon>Danio</taxon>
    </lineage>
</organism>
<gene>
    <name type="primary">ociad1</name>
    <name type="ORF">si:ch211-14g4.3</name>
    <name type="ORF">zgc:56639</name>
</gene>
<reference key="1">
    <citation type="journal article" date="2013" name="Nature">
        <title>The zebrafish reference genome sequence and its relationship to the human genome.</title>
        <authorList>
            <person name="Howe K."/>
            <person name="Clark M.D."/>
            <person name="Torroja C.F."/>
            <person name="Torrance J."/>
            <person name="Berthelot C."/>
            <person name="Muffato M."/>
            <person name="Collins J.E."/>
            <person name="Humphray S."/>
            <person name="McLaren K."/>
            <person name="Matthews L."/>
            <person name="McLaren S."/>
            <person name="Sealy I."/>
            <person name="Caccamo M."/>
            <person name="Churcher C."/>
            <person name="Scott C."/>
            <person name="Barrett J.C."/>
            <person name="Koch R."/>
            <person name="Rauch G.J."/>
            <person name="White S."/>
            <person name="Chow W."/>
            <person name="Kilian B."/>
            <person name="Quintais L.T."/>
            <person name="Guerra-Assuncao J.A."/>
            <person name="Zhou Y."/>
            <person name="Gu Y."/>
            <person name="Yen J."/>
            <person name="Vogel J.H."/>
            <person name="Eyre T."/>
            <person name="Redmond S."/>
            <person name="Banerjee R."/>
            <person name="Chi J."/>
            <person name="Fu B."/>
            <person name="Langley E."/>
            <person name="Maguire S.F."/>
            <person name="Laird G.K."/>
            <person name="Lloyd D."/>
            <person name="Kenyon E."/>
            <person name="Donaldson S."/>
            <person name="Sehra H."/>
            <person name="Almeida-King J."/>
            <person name="Loveland J."/>
            <person name="Trevanion S."/>
            <person name="Jones M."/>
            <person name="Quail M."/>
            <person name="Willey D."/>
            <person name="Hunt A."/>
            <person name="Burton J."/>
            <person name="Sims S."/>
            <person name="McLay K."/>
            <person name="Plumb B."/>
            <person name="Davis J."/>
            <person name="Clee C."/>
            <person name="Oliver K."/>
            <person name="Clark R."/>
            <person name="Riddle C."/>
            <person name="Elliot D."/>
            <person name="Threadgold G."/>
            <person name="Harden G."/>
            <person name="Ware D."/>
            <person name="Begum S."/>
            <person name="Mortimore B."/>
            <person name="Kerry G."/>
            <person name="Heath P."/>
            <person name="Phillimore B."/>
            <person name="Tracey A."/>
            <person name="Corby N."/>
            <person name="Dunn M."/>
            <person name="Johnson C."/>
            <person name="Wood J."/>
            <person name="Clark S."/>
            <person name="Pelan S."/>
            <person name="Griffiths G."/>
            <person name="Smith M."/>
            <person name="Glithero R."/>
            <person name="Howden P."/>
            <person name="Barker N."/>
            <person name="Lloyd C."/>
            <person name="Stevens C."/>
            <person name="Harley J."/>
            <person name="Holt K."/>
            <person name="Panagiotidis G."/>
            <person name="Lovell J."/>
            <person name="Beasley H."/>
            <person name="Henderson C."/>
            <person name="Gordon D."/>
            <person name="Auger K."/>
            <person name="Wright D."/>
            <person name="Collins J."/>
            <person name="Raisen C."/>
            <person name="Dyer L."/>
            <person name="Leung K."/>
            <person name="Robertson L."/>
            <person name="Ambridge K."/>
            <person name="Leongamornlert D."/>
            <person name="McGuire S."/>
            <person name="Gilderthorp R."/>
            <person name="Griffiths C."/>
            <person name="Manthravadi D."/>
            <person name="Nichol S."/>
            <person name="Barker G."/>
            <person name="Whitehead S."/>
            <person name="Kay M."/>
            <person name="Brown J."/>
            <person name="Murnane C."/>
            <person name="Gray E."/>
            <person name="Humphries M."/>
            <person name="Sycamore N."/>
            <person name="Barker D."/>
            <person name="Saunders D."/>
            <person name="Wallis J."/>
            <person name="Babbage A."/>
            <person name="Hammond S."/>
            <person name="Mashreghi-Mohammadi M."/>
            <person name="Barr L."/>
            <person name="Martin S."/>
            <person name="Wray P."/>
            <person name="Ellington A."/>
            <person name="Matthews N."/>
            <person name="Ellwood M."/>
            <person name="Woodmansey R."/>
            <person name="Clark G."/>
            <person name="Cooper J."/>
            <person name="Tromans A."/>
            <person name="Grafham D."/>
            <person name="Skuce C."/>
            <person name="Pandian R."/>
            <person name="Andrews R."/>
            <person name="Harrison E."/>
            <person name="Kimberley A."/>
            <person name="Garnett J."/>
            <person name="Fosker N."/>
            <person name="Hall R."/>
            <person name="Garner P."/>
            <person name="Kelly D."/>
            <person name="Bird C."/>
            <person name="Palmer S."/>
            <person name="Gehring I."/>
            <person name="Berger A."/>
            <person name="Dooley C.M."/>
            <person name="Ersan-Urun Z."/>
            <person name="Eser C."/>
            <person name="Geiger H."/>
            <person name="Geisler M."/>
            <person name="Karotki L."/>
            <person name="Kirn A."/>
            <person name="Konantz J."/>
            <person name="Konantz M."/>
            <person name="Oberlander M."/>
            <person name="Rudolph-Geiger S."/>
            <person name="Teucke M."/>
            <person name="Lanz C."/>
            <person name="Raddatz G."/>
            <person name="Osoegawa K."/>
            <person name="Zhu B."/>
            <person name="Rapp A."/>
            <person name="Widaa S."/>
            <person name="Langford C."/>
            <person name="Yang F."/>
            <person name="Schuster S.C."/>
            <person name="Carter N.P."/>
            <person name="Harrow J."/>
            <person name="Ning Z."/>
            <person name="Herrero J."/>
            <person name="Searle S.M."/>
            <person name="Enright A."/>
            <person name="Geisler R."/>
            <person name="Plasterk R.H."/>
            <person name="Lee C."/>
            <person name="Westerfield M."/>
            <person name="de Jong P.J."/>
            <person name="Zon L.I."/>
            <person name="Postlethwait J.H."/>
            <person name="Nusslein-Volhard C."/>
            <person name="Hubbard T.J."/>
            <person name="Roest Crollius H."/>
            <person name="Rogers J."/>
            <person name="Stemple D.L."/>
        </authorList>
    </citation>
    <scope>NUCLEOTIDE SEQUENCE [LARGE SCALE GENOMIC DNA]</scope>
    <source>
        <strain>Tuebingen</strain>
    </source>
</reference>
<reference key="2">
    <citation type="submission" date="2004-02" db="EMBL/GenBank/DDBJ databases">
        <authorList>
            <consortium name="NIH - Zebrafish Gene Collection (ZGC) project"/>
        </authorList>
    </citation>
    <scope>NUCLEOTIDE SEQUENCE [LARGE SCALE MRNA]</scope>
    <source>
        <tissue>Kidney</tissue>
    </source>
</reference>
<keyword id="KW-0967">Endosome</keyword>
<keyword id="KW-1185">Reference proteome</keyword>
<comment type="subcellular location">
    <subcellularLocation>
        <location evidence="1">Endosome</location>
    </subcellularLocation>
</comment>
<comment type="similarity">
    <text evidence="3">Belongs to the OCIAD1 family.</text>
</comment>
<feature type="chain" id="PRO_0000299386" description="OCIA domain-containing protein 1">
    <location>
        <begin position="1"/>
        <end position="266"/>
    </location>
</feature>
<feature type="domain" description="OCIA">
    <location>
        <begin position="1"/>
        <end position="114"/>
    </location>
</feature>
<feature type="region of interest" description="Disordered" evidence="2">
    <location>
        <begin position="127"/>
        <end position="213"/>
    </location>
</feature>
<feature type="region of interest" description="Disordered" evidence="2">
    <location>
        <begin position="225"/>
        <end position="266"/>
    </location>
</feature>
<feature type="compositionally biased region" description="Polar residues" evidence="2">
    <location>
        <begin position="135"/>
        <end position="155"/>
    </location>
</feature>
<feature type="compositionally biased region" description="Low complexity" evidence="2">
    <location>
        <begin position="156"/>
        <end position="178"/>
    </location>
</feature>
<feature type="compositionally biased region" description="Polar residues" evidence="2">
    <location>
        <begin position="179"/>
        <end position="188"/>
    </location>
</feature>
<feature type="compositionally biased region" description="Basic and acidic residues" evidence="2">
    <location>
        <begin position="250"/>
        <end position="266"/>
    </location>
</feature>
<feature type="sequence conflict" description="In Ref. 2; AAH49514." evidence="3" ref="2">
    <original>R</original>
    <variation>H</variation>
    <location>
        <position position="122"/>
    </location>
</feature>
<sequence>MSQASSGFTPAAQVQHGSSKGAFNSAYIPTEEEKRVFRECNSESFWYRSLPFSAIAVGITQVLVAKGMLSPSPRFGALPKIAFAGIFGYIGGKMSYVRVCQEKFMKLENSPLGEALRQGRLRHVSSEMNQPDFDPNSSESQQPGSESVQQPATEVSSATESYSSYTSDYTYSTPSQSYETTPFSSGFSDSGPANIRDDLPSQAPLYMEEDVPKRKPVLYEELRNKNRENYEVTLPQKNQTQMKPQMEVMQPKKEAKKNKYGDSWEE</sequence>
<accession>Q6NYD7</accession>
<accession>Q7ZW99</accession>